<organism>
    <name type="scientific">Salmonella enteritidis PT4 (strain P125109)</name>
    <dbReference type="NCBI Taxonomy" id="550537"/>
    <lineage>
        <taxon>Bacteria</taxon>
        <taxon>Pseudomonadati</taxon>
        <taxon>Pseudomonadota</taxon>
        <taxon>Gammaproteobacteria</taxon>
        <taxon>Enterobacterales</taxon>
        <taxon>Enterobacteriaceae</taxon>
        <taxon>Salmonella</taxon>
    </lineage>
</organism>
<proteinExistence type="inferred from homology"/>
<name>HSLV_SALEP</name>
<evidence type="ECO:0000255" key="1">
    <source>
        <dbReference type="HAMAP-Rule" id="MF_00248"/>
    </source>
</evidence>
<feature type="chain" id="PRO_1000100910" description="ATP-dependent protease subunit HslV">
    <location>
        <begin position="1"/>
        <end position="176"/>
    </location>
</feature>
<feature type="active site" evidence="1">
    <location>
        <position position="2"/>
    </location>
</feature>
<feature type="binding site" evidence="1">
    <location>
        <position position="157"/>
    </location>
    <ligand>
        <name>Na(+)</name>
        <dbReference type="ChEBI" id="CHEBI:29101"/>
    </ligand>
</feature>
<feature type="binding site" evidence="1">
    <location>
        <position position="160"/>
    </location>
    <ligand>
        <name>Na(+)</name>
        <dbReference type="ChEBI" id="CHEBI:29101"/>
    </ligand>
</feature>
<feature type="binding site" evidence="1">
    <location>
        <position position="163"/>
    </location>
    <ligand>
        <name>Na(+)</name>
        <dbReference type="ChEBI" id="CHEBI:29101"/>
    </ligand>
</feature>
<dbReference type="EC" id="3.4.25.2" evidence="1"/>
<dbReference type="EMBL" id="AM933172">
    <property type="protein sequence ID" value="CAR35456.1"/>
    <property type="molecule type" value="Genomic_DNA"/>
</dbReference>
<dbReference type="RefSeq" id="WP_000208240.1">
    <property type="nucleotide sequence ID" value="NC_011294.1"/>
</dbReference>
<dbReference type="SMR" id="B5QXM1"/>
<dbReference type="MEROPS" id="T01.006"/>
<dbReference type="KEGG" id="set:SEN3882"/>
<dbReference type="HOGENOM" id="CLU_093872_1_0_6"/>
<dbReference type="Proteomes" id="UP000000613">
    <property type="component" value="Chromosome"/>
</dbReference>
<dbReference type="GO" id="GO:0009376">
    <property type="term" value="C:HslUV protease complex"/>
    <property type="evidence" value="ECO:0007669"/>
    <property type="project" value="UniProtKB-UniRule"/>
</dbReference>
<dbReference type="GO" id="GO:0005839">
    <property type="term" value="C:proteasome core complex"/>
    <property type="evidence" value="ECO:0007669"/>
    <property type="project" value="InterPro"/>
</dbReference>
<dbReference type="GO" id="GO:0046872">
    <property type="term" value="F:metal ion binding"/>
    <property type="evidence" value="ECO:0007669"/>
    <property type="project" value="UniProtKB-KW"/>
</dbReference>
<dbReference type="GO" id="GO:0004298">
    <property type="term" value="F:threonine-type endopeptidase activity"/>
    <property type="evidence" value="ECO:0007669"/>
    <property type="project" value="UniProtKB-KW"/>
</dbReference>
<dbReference type="GO" id="GO:0051603">
    <property type="term" value="P:proteolysis involved in protein catabolic process"/>
    <property type="evidence" value="ECO:0007669"/>
    <property type="project" value="InterPro"/>
</dbReference>
<dbReference type="CDD" id="cd01913">
    <property type="entry name" value="protease_HslV"/>
    <property type="match status" value="1"/>
</dbReference>
<dbReference type="FunFam" id="3.60.20.10:FF:000002">
    <property type="entry name" value="ATP-dependent protease subunit HslV"/>
    <property type="match status" value="1"/>
</dbReference>
<dbReference type="Gene3D" id="3.60.20.10">
    <property type="entry name" value="Glutamine Phosphoribosylpyrophosphate, subunit 1, domain 1"/>
    <property type="match status" value="1"/>
</dbReference>
<dbReference type="HAMAP" id="MF_00248">
    <property type="entry name" value="HslV"/>
    <property type="match status" value="1"/>
</dbReference>
<dbReference type="InterPro" id="IPR022281">
    <property type="entry name" value="ATP-dep_Prtase_HsIV_su"/>
</dbReference>
<dbReference type="InterPro" id="IPR029055">
    <property type="entry name" value="Ntn_hydrolases_N"/>
</dbReference>
<dbReference type="InterPro" id="IPR001353">
    <property type="entry name" value="Proteasome_sua/b"/>
</dbReference>
<dbReference type="InterPro" id="IPR023333">
    <property type="entry name" value="Proteasome_suB-type"/>
</dbReference>
<dbReference type="NCBIfam" id="TIGR03692">
    <property type="entry name" value="ATP_dep_HslV"/>
    <property type="match status" value="1"/>
</dbReference>
<dbReference type="NCBIfam" id="NF003964">
    <property type="entry name" value="PRK05456.1"/>
    <property type="match status" value="1"/>
</dbReference>
<dbReference type="PANTHER" id="PTHR32194:SF0">
    <property type="entry name" value="ATP-DEPENDENT PROTEASE SUBUNIT HSLV"/>
    <property type="match status" value="1"/>
</dbReference>
<dbReference type="PANTHER" id="PTHR32194">
    <property type="entry name" value="METALLOPROTEASE TLDD"/>
    <property type="match status" value="1"/>
</dbReference>
<dbReference type="Pfam" id="PF00227">
    <property type="entry name" value="Proteasome"/>
    <property type="match status" value="1"/>
</dbReference>
<dbReference type="PIRSF" id="PIRSF039093">
    <property type="entry name" value="HslV"/>
    <property type="match status" value="1"/>
</dbReference>
<dbReference type="SUPFAM" id="SSF56235">
    <property type="entry name" value="N-terminal nucleophile aminohydrolases (Ntn hydrolases)"/>
    <property type="match status" value="1"/>
</dbReference>
<dbReference type="PROSITE" id="PS51476">
    <property type="entry name" value="PROTEASOME_BETA_2"/>
    <property type="match status" value="1"/>
</dbReference>
<gene>
    <name evidence="1" type="primary">hslV</name>
    <name type="ordered locus">SEN3882</name>
</gene>
<comment type="function">
    <text evidence="1">Protease subunit of a proteasome-like degradation complex believed to be a general protein degrading machinery.</text>
</comment>
<comment type="catalytic activity">
    <reaction evidence="1">
        <text>ATP-dependent cleavage of peptide bonds with broad specificity.</text>
        <dbReference type="EC" id="3.4.25.2"/>
    </reaction>
</comment>
<comment type="activity regulation">
    <text evidence="1">Allosterically activated by HslU binding.</text>
</comment>
<comment type="subunit">
    <text evidence="1">A double ring-shaped homohexamer of HslV is capped on each side by a ring-shaped HslU homohexamer. The assembly of the HslU/HslV complex is dependent on binding of ATP.</text>
</comment>
<comment type="subcellular location">
    <subcellularLocation>
        <location evidence="1">Cytoplasm</location>
    </subcellularLocation>
</comment>
<comment type="induction">
    <text evidence="1">By heat shock.</text>
</comment>
<comment type="similarity">
    <text evidence="1">Belongs to the peptidase T1B family. HslV subfamily.</text>
</comment>
<reference key="1">
    <citation type="journal article" date="2008" name="Genome Res.">
        <title>Comparative genome analysis of Salmonella enteritidis PT4 and Salmonella gallinarum 287/91 provides insights into evolutionary and host adaptation pathways.</title>
        <authorList>
            <person name="Thomson N.R."/>
            <person name="Clayton D.J."/>
            <person name="Windhorst D."/>
            <person name="Vernikos G."/>
            <person name="Davidson S."/>
            <person name="Churcher C."/>
            <person name="Quail M.A."/>
            <person name="Stevens M."/>
            <person name="Jones M.A."/>
            <person name="Watson M."/>
            <person name="Barron A."/>
            <person name="Layton A."/>
            <person name="Pickard D."/>
            <person name="Kingsley R.A."/>
            <person name="Bignell A."/>
            <person name="Clark L."/>
            <person name="Harris B."/>
            <person name="Ormond D."/>
            <person name="Abdellah Z."/>
            <person name="Brooks K."/>
            <person name="Cherevach I."/>
            <person name="Chillingworth T."/>
            <person name="Woodward J."/>
            <person name="Norberczak H."/>
            <person name="Lord A."/>
            <person name="Arrowsmith C."/>
            <person name="Jagels K."/>
            <person name="Moule S."/>
            <person name="Mungall K."/>
            <person name="Saunders M."/>
            <person name="Whitehead S."/>
            <person name="Chabalgoity J.A."/>
            <person name="Maskell D."/>
            <person name="Humphreys T."/>
            <person name="Roberts M."/>
            <person name="Barrow P.A."/>
            <person name="Dougan G."/>
            <person name="Parkhill J."/>
        </authorList>
    </citation>
    <scope>NUCLEOTIDE SEQUENCE [LARGE SCALE GENOMIC DNA]</scope>
    <source>
        <strain>P125109</strain>
    </source>
</reference>
<protein>
    <recommendedName>
        <fullName evidence="1">ATP-dependent protease subunit HslV</fullName>
        <ecNumber evidence="1">3.4.25.2</ecNumber>
    </recommendedName>
    <alternativeName>
        <fullName evidence="1">Heat shock protein HslV</fullName>
    </alternativeName>
</protein>
<keyword id="KW-0021">Allosteric enzyme</keyword>
<keyword id="KW-0963">Cytoplasm</keyword>
<keyword id="KW-0378">Hydrolase</keyword>
<keyword id="KW-0479">Metal-binding</keyword>
<keyword id="KW-0645">Protease</keyword>
<keyword id="KW-0915">Sodium</keyword>
<keyword id="KW-0346">Stress response</keyword>
<keyword id="KW-0888">Threonine protease</keyword>
<sequence length="176" mass="18985">MTTIVSVRRNGHVVIAGDGQATLGNTVMKGNVKKVRRLYNDKVIAGFAGGTADAFTLFELFERKLEMHQGHLVKAAVELAKDWRTDRMLRKLEALLAVADETASLIITGNGDVVQPENDLIAIGSGGPYAQAAARALLENTELGAREIAEKALDIAGDICIYTNHFHTIEELTAKA</sequence>
<accession>B5QXM1</accession>